<proteinExistence type="inferred from homology"/>
<evidence type="ECO:0000255" key="1">
    <source>
        <dbReference type="HAMAP-Rule" id="MF_00346"/>
    </source>
</evidence>
<name>Y3406_XANAC</name>
<gene>
    <name type="ordered locus">XAC3406</name>
</gene>
<dbReference type="EMBL" id="AE008923">
    <property type="protein sequence ID" value="AAM38249.1"/>
    <property type="molecule type" value="Genomic_DNA"/>
</dbReference>
<dbReference type="RefSeq" id="WP_007967665.1">
    <property type="nucleotide sequence ID" value="NC_003919.1"/>
</dbReference>
<dbReference type="SMR" id="Q8PH54"/>
<dbReference type="KEGG" id="xac:XAC3406"/>
<dbReference type="eggNOG" id="COG3079">
    <property type="taxonomic scope" value="Bacteria"/>
</dbReference>
<dbReference type="HOGENOM" id="CLU_085336_0_0_6"/>
<dbReference type="Proteomes" id="UP000000576">
    <property type="component" value="Chromosome"/>
</dbReference>
<dbReference type="GO" id="GO:0005829">
    <property type="term" value="C:cytosol"/>
    <property type="evidence" value="ECO:0007669"/>
    <property type="project" value="TreeGrafter"/>
</dbReference>
<dbReference type="FunFam" id="1.20.120.740:FF:000002">
    <property type="entry name" value="UPF0149 protein XC_0904"/>
    <property type="match status" value="1"/>
</dbReference>
<dbReference type="Gene3D" id="1.20.120.740">
    <property type="entry name" value="YgfB uncharacterised protein family UPF0149, PF03695"/>
    <property type="match status" value="1"/>
</dbReference>
<dbReference type="HAMAP" id="MF_00346">
    <property type="entry name" value="UPF0149"/>
    <property type="match status" value="1"/>
</dbReference>
<dbReference type="InterPro" id="IPR011978">
    <property type="entry name" value="YgfB-like"/>
</dbReference>
<dbReference type="InterPro" id="IPR036255">
    <property type="entry name" value="YgfB-like_sf"/>
</dbReference>
<dbReference type="NCBIfam" id="NF003405">
    <property type="entry name" value="PRK04758.1"/>
    <property type="match status" value="1"/>
</dbReference>
<dbReference type="PANTHER" id="PTHR37528">
    <property type="entry name" value="UPF0149 PROTEIN YGFB"/>
    <property type="match status" value="1"/>
</dbReference>
<dbReference type="PANTHER" id="PTHR37528:SF1">
    <property type="entry name" value="UPF0149 PROTEIN YGFB"/>
    <property type="match status" value="1"/>
</dbReference>
<dbReference type="Pfam" id="PF03695">
    <property type="entry name" value="UPF0149"/>
    <property type="match status" value="1"/>
</dbReference>
<dbReference type="SUPFAM" id="SSF101327">
    <property type="entry name" value="YgfB-like"/>
    <property type="match status" value="1"/>
</dbReference>
<organism>
    <name type="scientific">Xanthomonas axonopodis pv. citri (strain 306)</name>
    <dbReference type="NCBI Taxonomy" id="190486"/>
    <lineage>
        <taxon>Bacteria</taxon>
        <taxon>Pseudomonadati</taxon>
        <taxon>Pseudomonadota</taxon>
        <taxon>Gammaproteobacteria</taxon>
        <taxon>Lysobacterales</taxon>
        <taxon>Lysobacteraceae</taxon>
        <taxon>Xanthomonas</taxon>
    </lineage>
</organism>
<reference key="1">
    <citation type="journal article" date="2002" name="Nature">
        <title>Comparison of the genomes of two Xanthomonas pathogens with differing host specificities.</title>
        <authorList>
            <person name="da Silva A.C.R."/>
            <person name="Ferro J.A."/>
            <person name="Reinach F.C."/>
            <person name="Farah C.S."/>
            <person name="Furlan L.R."/>
            <person name="Quaggio R.B."/>
            <person name="Monteiro-Vitorello C.B."/>
            <person name="Van Sluys M.A."/>
            <person name="Almeida N.F. Jr."/>
            <person name="Alves L.M.C."/>
            <person name="do Amaral A.M."/>
            <person name="Bertolini M.C."/>
            <person name="Camargo L.E.A."/>
            <person name="Camarotte G."/>
            <person name="Cannavan F."/>
            <person name="Cardozo J."/>
            <person name="Chambergo F."/>
            <person name="Ciapina L.P."/>
            <person name="Cicarelli R.M.B."/>
            <person name="Coutinho L.L."/>
            <person name="Cursino-Santos J.R."/>
            <person name="El-Dorry H."/>
            <person name="Faria J.B."/>
            <person name="Ferreira A.J.S."/>
            <person name="Ferreira R.C.C."/>
            <person name="Ferro M.I.T."/>
            <person name="Formighieri E.F."/>
            <person name="Franco M.C."/>
            <person name="Greggio C.C."/>
            <person name="Gruber A."/>
            <person name="Katsuyama A.M."/>
            <person name="Kishi L.T."/>
            <person name="Leite R.P."/>
            <person name="Lemos E.G.M."/>
            <person name="Lemos M.V.F."/>
            <person name="Locali E.C."/>
            <person name="Machado M.A."/>
            <person name="Madeira A.M.B.N."/>
            <person name="Martinez-Rossi N.M."/>
            <person name="Martins E.C."/>
            <person name="Meidanis J."/>
            <person name="Menck C.F.M."/>
            <person name="Miyaki C.Y."/>
            <person name="Moon D.H."/>
            <person name="Moreira L.M."/>
            <person name="Novo M.T.M."/>
            <person name="Okura V.K."/>
            <person name="Oliveira M.C."/>
            <person name="Oliveira V.R."/>
            <person name="Pereira H.A."/>
            <person name="Rossi A."/>
            <person name="Sena J.A.D."/>
            <person name="Silva C."/>
            <person name="de Souza R.F."/>
            <person name="Spinola L.A.F."/>
            <person name="Takita M.A."/>
            <person name="Tamura R.E."/>
            <person name="Teixeira E.C."/>
            <person name="Tezza R.I.D."/>
            <person name="Trindade dos Santos M."/>
            <person name="Truffi D."/>
            <person name="Tsai S.M."/>
            <person name="White F.F."/>
            <person name="Setubal J.C."/>
            <person name="Kitajima J.P."/>
        </authorList>
    </citation>
    <scope>NUCLEOTIDE SEQUENCE [LARGE SCALE GENOMIC DNA]</scope>
    <source>
        <strain>306</strain>
    </source>
</reference>
<sequence>MDLPDVTAVQHESRQLALASSAAELHGGLCGWLSGGGADSADWLARILADSGQVAPRQGGALDQLRQATVAQLEDRDFAFELLLVEDGAPLPARTDALFDWCRAFLGGFGLAAQQRPALSEEGEEALQDLARLAQASSDDFDTADEDDTALAEIEEFVRVAVLLLHGDCVMGPRFRQRLN</sequence>
<feature type="chain" id="PRO_0000207574" description="UPF0149 protein XAC3406">
    <location>
        <begin position="1"/>
        <end position="180"/>
    </location>
</feature>
<accession>Q8PH54</accession>
<protein>
    <recommendedName>
        <fullName evidence="1">UPF0149 protein XAC3406</fullName>
    </recommendedName>
</protein>
<comment type="similarity">
    <text evidence="1">Belongs to the UPF0149 family.</text>
</comment>